<name>NTPPB_SYNC1</name>
<gene>
    <name type="ordered locus">Pcar_1221</name>
</gene>
<reference key="1">
    <citation type="submission" date="2005-10" db="EMBL/GenBank/DDBJ databases">
        <title>Complete sequence of Pelobacter carbinolicus DSM 2380.</title>
        <authorList>
            <person name="Copeland A."/>
            <person name="Lucas S."/>
            <person name="Lapidus A."/>
            <person name="Barry K."/>
            <person name="Detter J.C."/>
            <person name="Glavina T."/>
            <person name="Hammon N."/>
            <person name="Israni S."/>
            <person name="Pitluck S."/>
            <person name="Chertkov O."/>
            <person name="Schmutz J."/>
            <person name="Larimer F."/>
            <person name="Land M."/>
            <person name="Kyrpides N."/>
            <person name="Ivanova N."/>
            <person name="Richardson P."/>
        </authorList>
    </citation>
    <scope>NUCLEOTIDE SEQUENCE [LARGE SCALE GENOMIC DNA]</scope>
    <source>
        <strain>DSM 2380 / NBRC 103641 / GraBd1</strain>
    </source>
</reference>
<accession>Q3A587</accession>
<evidence type="ECO:0000255" key="1">
    <source>
        <dbReference type="HAMAP-Rule" id="MF_00528"/>
    </source>
</evidence>
<keyword id="KW-0963">Cytoplasm</keyword>
<keyword id="KW-0378">Hydrolase</keyword>
<keyword id="KW-0546">Nucleotide metabolism</keyword>
<keyword id="KW-1185">Reference proteome</keyword>
<dbReference type="EC" id="3.6.1.-" evidence="1"/>
<dbReference type="EMBL" id="CP000142">
    <property type="protein sequence ID" value="ABA88470.1"/>
    <property type="molecule type" value="Genomic_DNA"/>
</dbReference>
<dbReference type="RefSeq" id="WP_011340944.1">
    <property type="nucleotide sequence ID" value="NC_007498.2"/>
</dbReference>
<dbReference type="SMR" id="Q3A587"/>
<dbReference type="STRING" id="338963.Pcar_1221"/>
<dbReference type="KEGG" id="pca:Pcar_1221"/>
<dbReference type="eggNOG" id="COG0424">
    <property type="taxonomic scope" value="Bacteria"/>
</dbReference>
<dbReference type="HOGENOM" id="CLU_040416_1_0_7"/>
<dbReference type="OrthoDB" id="9807767at2"/>
<dbReference type="Proteomes" id="UP000002534">
    <property type="component" value="Chromosome"/>
</dbReference>
<dbReference type="GO" id="GO:0005737">
    <property type="term" value="C:cytoplasm"/>
    <property type="evidence" value="ECO:0007669"/>
    <property type="project" value="UniProtKB-SubCell"/>
</dbReference>
<dbReference type="GO" id="GO:0047429">
    <property type="term" value="F:nucleoside triphosphate diphosphatase activity"/>
    <property type="evidence" value="ECO:0007669"/>
    <property type="project" value="InterPro"/>
</dbReference>
<dbReference type="GO" id="GO:0009117">
    <property type="term" value="P:nucleotide metabolic process"/>
    <property type="evidence" value="ECO:0007669"/>
    <property type="project" value="UniProtKB-KW"/>
</dbReference>
<dbReference type="CDD" id="cd00555">
    <property type="entry name" value="Maf"/>
    <property type="match status" value="1"/>
</dbReference>
<dbReference type="FunFam" id="3.90.950.10:FF:000005">
    <property type="entry name" value="7-methyl-GTP pyrophosphatase"/>
    <property type="match status" value="1"/>
</dbReference>
<dbReference type="Gene3D" id="3.90.950.10">
    <property type="match status" value="1"/>
</dbReference>
<dbReference type="HAMAP" id="MF_00528">
    <property type="entry name" value="Maf"/>
    <property type="match status" value="1"/>
</dbReference>
<dbReference type="InterPro" id="IPR029001">
    <property type="entry name" value="ITPase-like_fam"/>
</dbReference>
<dbReference type="InterPro" id="IPR003697">
    <property type="entry name" value="Maf-like"/>
</dbReference>
<dbReference type="NCBIfam" id="TIGR00172">
    <property type="entry name" value="maf"/>
    <property type="match status" value="1"/>
</dbReference>
<dbReference type="PANTHER" id="PTHR43213:SF10">
    <property type="entry name" value="7-METHYL-GTP PYROPHOSPHATASE"/>
    <property type="match status" value="1"/>
</dbReference>
<dbReference type="PANTHER" id="PTHR43213">
    <property type="entry name" value="BIFUNCTIONAL DTTP/UTP PYROPHOSPHATASE/METHYLTRANSFERASE PROTEIN-RELATED"/>
    <property type="match status" value="1"/>
</dbReference>
<dbReference type="Pfam" id="PF02545">
    <property type="entry name" value="Maf"/>
    <property type="match status" value="1"/>
</dbReference>
<dbReference type="PIRSF" id="PIRSF006305">
    <property type="entry name" value="Maf"/>
    <property type="match status" value="1"/>
</dbReference>
<dbReference type="SUPFAM" id="SSF52972">
    <property type="entry name" value="ITPase-like"/>
    <property type="match status" value="1"/>
</dbReference>
<protein>
    <recommendedName>
        <fullName evidence="1">7-methyl-GTP pyrophosphatase</fullName>
        <shortName evidence="1">m(7)GTP pyrophosphatase</shortName>
        <ecNumber evidence="1">3.6.1.-</ecNumber>
    </recommendedName>
</protein>
<organism>
    <name type="scientific">Syntrophotalea carbinolica (strain DSM 2380 / NBRC 103641 / GraBd1)</name>
    <name type="common">Pelobacter carbinolicus</name>
    <dbReference type="NCBI Taxonomy" id="338963"/>
    <lineage>
        <taxon>Bacteria</taxon>
        <taxon>Pseudomonadati</taxon>
        <taxon>Thermodesulfobacteriota</taxon>
        <taxon>Desulfuromonadia</taxon>
        <taxon>Desulfuromonadales</taxon>
        <taxon>Syntrophotaleaceae</taxon>
        <taxon>Syntrophotalea</taxon>
    </lineage>
</organism>
<comment type="function">
    <text evidence="1">Nucleoside triphosphate pyrophosphatase that hydrolyzes 7-methyl-GTP (m(7)GTP). May have a dual role in cell division arrest and in preventing the incorporation of modified nucleotides into cellular nucleic acids.</text>
</comment>
<comment type="catalytic activity">
    <reaction evidence="1">
        <text>N(7)-methyl-GTP + H2O = N(7)-methyl-GMP + diphosphate + H(+)</text>
        <dbReference type="Rhea" id="RHEA:58744"/>
        <dbReference type="ChEBI" id="CHEBI:15377"/>
        <dbReference type="ChEBI" id="CHEBI:15378"/>
        <dbReference type="ChEBI" id="CHEBI:33019"/>
        <dbReference type="ChEBI" id="CHEBI:58285"/>
        <dbReference type="ChEBI" id="CHEBI:87133"/>
    </reaction>
</comment>
<comment type="cofactor">
    <cofactor evidence="1">
        <name>a divalent metal cation</name>
        <dbReference type="ChEBI" id="CHEBI:60240"/>
    </cofactor>
</comment>
<comment type="subcellular location">
    <subcellularLocation>
        <location evidence="1">Cytoplasm</location>
    </subcellularLocation>
</comment>
<comment type="similarity">
    <text evidence="1">Belongs to the Maf family. YceF subfamily.</text>
</comment>
<sequence>MKIIVLASTSPYRMQLMRQLGLPFHVAAPQYQEQIDQEIAPELLVKHQAAGKAKSLAQKYPDALIIGSDQVFVDASGRVLGKPDSLEGAVRQLRGMAGKSHTFYTGLSVYDSNRDETLTGFATYRVTLRALTEQEIRCYLQRENPLDCAGSFKVEGLGIALMQRLEGDDYTTLIGLPLIKLVDFLGHFGVRVLGDQA</sequence>
<proteinExistence type="inferred from homology"/>
<feature type="chain" id="PRO_0000267364" description="7-methyl-GTP pyrophosphatase">
    <location>
        <begin position="1"/>
        <end position="197"/>
    </location>
</feature>
<feature type="active site" description="Proton acceptor" evidence="1">
    <location>
        <position position="69"/>
    </location>
</feature>
<feature type="site" description="Important for substrate specificity" evidence="1">
    <location>
        <position position="12"/>
    </location>
</feature>
<feature type="site" description="Important for substrate specificity" evidence="1">
    <location>
        <position position="70"/>
    </location>
</feature>
<feature type="site" description="Important for substrate specificity" evidence="1">
    <location>
        <position position="155"/>
    </location>
</feature>